<accession>P10537</accession>
<keyword id="KW-0002">3D-structure</keyword>
<keyword id="KW-0119">Carbohydrate metabolism</keyword>
<keyword id="KW-0903">Direct protein sequencing</keyword>
<keyword id="KW-0326">Glycosidase</keyword>
<keyword id="KW-0378">Hydrolase</keyword>
<keyword id="KW-0624">Polysaccharide degradation</keyword>
<dbReference type="EC" id="3.2.1.2"/>
<dbReference type="EMBL" id="D01022">
    <property type="protein sequence ID" value="BAA00828.1"/>
    <property type="molecule type" value="mRNA"/>
</dbReference>
<dbReference type="EMBL" id="D12882">
    <property type="protein sequence ID" value="BAA02286.1"/>
    <property type="molecule type" value="Genomic_DNA"/>
</dbReference>
<dbReference type="PIR" id="JC1447">
    <property type="entry name" value="JC1447"/>
</dbReference>
<dbReference type="PDB" id="1FA2">
    <property type="method" value="X-ray"/>
    <property type="resolution" value="2.30 A"/>
    <property type="chains" value="A=2-499"/>
</dbReference>
<dbReference type="PDB" id="5WQS">
    <property type="method" value="X-ray"/>
    <property type="resolution" value="1.90 A"/>
    <property type="chains" value="A=2-499"/>
</dbReference>
<dbReference type="PDB" id="5WQU">
    <property type="method" value="X-ray"/>
    <property type="resolution" value="2.49 A"/>
    <property type="chains" value="A=2-499"/>
</dbReference>
<dbReference type="PDBsum" id="1FA2"/>
<dbReference type="PDBsum" id="5WQS"/>
<dbReference type="PDBsum" id="5WQU"/>
<dbReference type="PCDDB" id="P10537"/>
<dbReference type="SASBDB" id="P10537"/>
<dbReference type="SMR" id="P10537"/>
<dbReference type="CAZy" id="GH14">
    <property type="family name" value="Glycoside Hydrolase Family 14"/>
</dbReference>
<dbReference type="BRENDA" id="3.2.1.2">
    <property type="organism ID" value="2773"/>
</dbReference>
<dbReference type="EvolutionaryTrace" id="P10537"/>
<dbReference type="GO" id="GO:0016161">
    <property type="term" value="F:beta-amylase activity"/>
    <property type="evidence" value="ECO:0007669"/>
    <property type="project" value="UniProtKB-EC"/>
</dbReference>
<dbReference type="GO" id="GO:0000272">
    <property type="term" value="P:polysaccharide catabolic process"/>
    <property type="evidence" value="ECO:0007669"/>
    <property type="project" value="UniProtKB-KW"/>
</dbReference>
<dbReference type="FunFam" id="3.20.20.80:FF:000066">
    <property type="entry name" value="Beta-amylase"/>
    <property type="match status" value="1"/>
</dbReference>
<dbReference type="Gene3D" id="3.20.20.80">
    <property type="entry name" value="Glycosidases"/>
    <property type="match status" value="1"/>
</dbReference>
<dbReference type="InterPro" id="IPR001554">
    <property type="entry name" value="Glyco_hydro_14"/>
</dbReference>
<dbReference type="InterPro" id="IPR018238">
    <property type="entry name" value="Glyco_hydro_14_CS"/>
</dbReference>
<dbReference type="InterPro" id="IPR001371">
    <property type="entry name" value="Glyco_hydro_14B_pln"/>
</dbReference>
<dbReference type="InterPro" id="IPR017853">
    <property type="entry name" value="Glycoside_hydrolase_SF"/>
</dbReference>
<dbReference type="PANTHER" id="PTHR31352">
    <property type="entry name" value="BETA-AMYLASE 1, CHLOROPLASTIC"/>
    <property type="match status" value="1"/>
</dbReference>
<dbReference type="PANTHER" id="PTHR31352:SF40">
    <property type="entry name" value="BETA-AMYLASE 6"/>
    <property type="match status" value="1"/>
</dbReference>
<dbReference type="Pfam" id="PF01373">
    <property type="entry name" value="Glyco_hydro_14"/>
    <property type="match status" value="1"/>
</dbReference>
<dbReference type="PRINTS" id="PR00750">
    <property type="entry name" value="BETAAMYLASE"/>
</dbReference>
<dbReference type="PRINTS" id="PR00842">
    <property type="entry name" value="GLHYDLASE14B"/>
</dbReference>
<dbReference type="SUPFAM" id="SSF51445">
    <property type="entry name" value="(Trans)glycosidases"/>
    <property type="match status" value="1"/>
</dbReference>
<dbReference type="PROSITE" id="PS00506">
    <property type="entry name" value="BETA_AMYLASE_1"/>
    <property type="match status" value="1"/>
</dbReference>
<dbReference type="PROSITE" id="PS00679">
    <property type="entry name" value="BETA_AMYLASE_2"/>
    <property type="match status" value="1"/>
</dbReference>
<organism>
    <name type="scientific">Ipomoea batatas</name>
    <name type="common">Sweet potato</name>
    <name type="synonym">Convolvulus batatas</name>
    <dbReference type="NCBI Taxonomy" id="4120"/>
    <lineage>
        <taxon>Eukaryota</taxon>
        <taxon>Viridiplantae</taxon>
        <taxon>Streptophyta</taxon>
        <taxon>Embryophyta</taxon>
        <taxon>Tracheophyta</taxon>
        <taxon>Spermatophyta</taxon>
        <taxon>Magnoliopsida</taxon>
        <taxon>eudicotyledons</taxon>
        <taxon>Gunneridae</taxon>
        <taxon>Pentapetalae</taxon>
        <taxon>asterids</taxon>
        <taxon>lamiids</taxon>
        <taxon>Solanales</taxon>
        <taxon>Convolvulaceae</taxon>
        <taxon>Ipomoeeae</taxon>
        <taxon>Ipomoea</taxon>
    </lineage>
</organism>
<name>AMYB_IPOBA</name>
<protein>
    <recommendedName>
        <fullName>Beta-amylase</fullName>
        <ecNumber>3.2.1.2</ecNumber>
    </recommendedName>
    <alternativeName>
        <fullName>1,4-alpha-D-glucan maltohydrolase</fullName>
    </alternativeName>
</protein>
<sequence length="499" mass="56080">MAPIPGVMPIGNYVSLYVMLPLGVVNADNVFPDKEKVEDELKQVKAGGCDGVMVDVWWGIIEAKGPKQYDWSAYRELFQLVKKCGLKIQAIMSFHQCGGNVGDAVFIPIPQWILQIGDKNPDIFYTNRAGNRNQEYLSLGVDNQRLFQGRTALEMYRDFMESFRDNMADFLKAGDIVDIEVGCGAAGELRYPSYPETQGWVFPGIGEFQCYDKYMVADWKEAVKQAGNADWEMPGKGAGTYNDTPDKTEFFRPNGTYKTDMGKFFLTWYSNKLIIHGDQVLEEANKVFVGLRVNIAAKVSGIHWWYNHVSHAAELTAGFYNVAGRDGYRPIARMLARHHATLNFTCLEMRDSEQPAEAKSAPQELVQQVLSSGWKEYIDVAGENALPRYDATAYNQMLLNVRPNGVNLNGPPKLKMSGLTYLRLSDDLLQTDNFELFKKFVKKMHADLDPSPNAISPAVLERSNSAITIDELMEATKGSRPFPWYDVTDMPVDGSNPFD</sequence>
<evidence type="ECO:0000250" key="1">
    <source>
        <dbReference type="UniProtKB" id="P10538"/>
    </source>
</evidence>
<evidence type="ECO:0000255" key="2">
    <source>
        <dbReference type="PROSITE-ProRule" id="PRU10050"/>
    </source>
</evidence>
<evidence type="ECO:0000269" key="3">
    <source>
    </source>
</evidence>
<evidence type="ECO:0000305" key="4"/>
<evidence type="ECO:0007829" key="5">
    <source>
        <dbReference type="PDB" id="1FA2"/>
    </source>
</evidence>
<evidence type="ECO:0007829" key="6">
    <source>
        <dbReference type="PDB" id="5WQS"/>
    </source>
</evidence>
<comment type="catalytic activity">
    <reaction>
        <text>Hydrolysis of (1-&gt;4)-alpha-D-glucosidic linkages in polysaccharides so as to remove successive maltose units from the non-reducing ends of the chains.</text>
        <dbReference type="EC" id="3.2.1.2"/>
    </reaction>
</comment>
<comment type="biophysicochemical properties">
    <phDependence>
        <text>Optimum pH is 5-6.</text>
    </phDependence>
    <temperatureDependence>
        <text>Optimum temperature is 50-55 degrees Celsius.</text>
    </temperatureDependence>
</comment>
<comment type="subunit">
    <text>Homotetramer.</text>
</comment>
<comment type="similarity">
    <text evidence="4">Belongs to the glycosyl hydrolase 14 family.</text>
</comment>
<reference key="1">
    <citation type="journal article" date="1991" name="J. Biochem.">
        <title>Molecular cloning and expression in Escherichia coli of cDNA encoding the subunit of sweet potato beta-amylase.</title>
        <authorList>
            <person name="Yoshida N."/>
            <person name="Nakamura K."/>
        </authorList>
    </citation>
    <scope>NUCLEOTIDE SEQUENCE</scope>
    <source>
        <strain>cv. Kokei No. 14</strain>
        <tissue>Tuberous root</tissue>
    </source>
</reference>
<reference key="2">
    <citation type="journal article" date="1992" name="Gene">
        <title>A nuclear gene encoding beta-amylase of sweet potato.</title>
        <authorList>
            <person name="Yoshida N."/>
            <person name="Hayashi K."/>
            <person name="Nakamura K."/>
        </authorList>
    </citation>
    <scope>NUCLEOTIDE SEQUENCE [GENOMIC DNA]</scope>
</reference>
<reference key="3">
    <citation type="journal article" date="1993" name="Eur. J. Biochem.">
        <title>Sweet potato beta-amylase. Primary structure and identification of the active-site glutamyl residue.</title>
        <authorList>
            <person name="Toda H."/>
            <person name="Nitta Y."/>
            <person name="Asanami S."/>
            <person name="Kim J.P."/>
            <person name="Sakiyama F."/>
        </authorList>
    </citation>
    <scope>PROTEIN SEQUENCE OF 2-499</scope>
    <scope>ACTIVE SITE GLU-188</scope>
    <source>
        <tissue>Tuberous root</tissue>
    </source>
</reference>
<reference key="4">
    <citation type="journal article" date="1995" name="Proteins">
        <title>Crystallization, molecular replacement solution, and refinement of tetrameric beta-amylase from sweet potato.</title>
        <authorList>
            <person name="Cheong C.G."/>
            <person name="Eom S.H."/>
            <person name="Chang C."/>
            <person name="Shin D.H."/>
            <person name="Song H.Y."/>
            <person name="Min K."/>
            <person name="Moon J.H."/>
            <person name="Kim K.K."/>
            <person name="Hwang K.Y."/>
            <person name="Suh S.W."/>
        </authorList>
    </citation>
    <scope>CRYSTALLIZATION</scope>
    <scope>X-RAY CRYSTALLOGRAPHY (2.3 ANGSTROMS)</scope>
</reference>
<feature type="initiator methionine" description="Removed" evidence="3">
    <location>
        <position position="1"/>
    </location>
</feature>
<feature type="chain" id="PRO_0000153934" description="Beta-amylase">
    <location>
        <begin position="2"/>
        <end position="499"/>
    </location>
</feature>
<feature type="active site" description="Proton donor" evidence="2">
    <location>
        <position position="188"/>
    </location>
</feature>
<feature type="active site" description="Proton acceptor" evidence="1">
    <location>
        <position position="383"/>
    </location>
</feature>
<feature type="binding site" evidence="1">
    <location>
        <position position="55"/>
    </location>
    <ligand>
        <name>substrate</name>
    </ligand>
</feature>
<feature type="binding site" evidence="1">
    <location>
        <position position="95"/>
    </location>
    <ligand>
        <name>substrate</name>
    </ligand>
</feature>
<feature type="binding site" evidence="1">
    <location>
        <position position="103"/>
    </location>
    <ligand>
        <name>substrate</name>
    </ligand>
</feature>
<feature type="binding site" evidence="1">
    <location>
        <position position="298"/>
    </location>
    <ligand>
        <name>substrate</name>
    </ligand>
</feature>
<feature type="binding site" evidence="1">
    <location>
        <position position="303"/>
    </location>
    <ligand>
        <name>substrate</name>
    </ligand>
</feature>
<feature type="binding site" evidence="1">
    <location>
        <position position="345"/>
    </location>
    <ligand>
        <name>substrate</name>
    </ligand>
</feature>
<feature type="binding site" evidence="1">
    <location>
        <begin position="384"/>
        <end position="385"/>
    </location>
    <ligand>
        <name>substrate</name>
    </ligand>
</feature>
<feature type="binding site" evidence="1">
    <location>
        <position position="423"/>
    </location>
    <ligand>
        <name>substrate</name>
    </ligand>
</feature>
<feature type="sequence conflict" description="In Ref. 2; BAA02286." evidence="4" ref="2">
    <original>A</original>
    <variation>T</variation>
    <location>
        <position position="238"/>
    </location>
</feature>
<feature type="sequence conflict" description="In Ref. 1; BAA00828." evidence="4" ref="1">
    <original>YKTDMGKF</original>
    <variation>LQDGYGQV</variation>
    <location>
        <begin position="257"/>
        <end position="264"/>
    </location>
</feature>
<feature type="sequence conflict" description="In Ref. 1; BAA00828." evidence="4" ref="1">
    <original>SGW</original>
    <variation>RQV</variation>
    <location>
        <begin position="372"/>
        <end position="374"/>
    </location>
</feature>
<feature type="sequence conflict" description="In Ref. 2; BAA02286." evidence="4" ref="2">
    <original>M</original>
    <variation>I</variation>
    <location>
        <position position="397"/>
    </location>
</feature>
<feature type="sequence conflict" description="In Ref. 1; BAA00828." evidence="4" ref="1">
    <original>NV</original>
    <variation>KL</variation>
    <location>
        <begin position="400"/>
        <end position="401"/>
    </location>
</feature>
<feature type="helix" evidence="6">
    <location>
        <begin position="10"/>
        <end position="12"/>
    </location>
</feature>
<feature type="strand" evidence="6">
    <location>
        <begin position="16"/>
        <end position="19"/>
    </location>
</feature>
<feature type="strand" evidence="5">
    <location>
        <begin position="27"/>
        <end position="29"/>
    </location>
</feature>
<feature type="helix" evidence="6">
    <location>
        <begin position="34"/>
        <end position="46"/>
    </location>
</feature>
<feature type="strand" evidence="6">
    <location>
        <begin position="51"/>
        <end position="57"/>
    </location>
</feature>
<feature type="helix" evidence="6">
    <location>
        <begin position="58"/>
        <end position="61"/>
    </location>
</feature>
<feature type="helix" evidence="6">
    <location>
        <begin position="72"/>
        <end position="83"/>
    </location>
</feature>
<feature type="strand" evidence="6">
    <location>
        <begin position="87"/>
        <end position="93"/>
    </location>
</feature>
<feature type="strand" evidence="6">
    <location>
        <begin position="100"/>
        <end position="102"/>
    </location>
</feature>
<feature type="helix" evidence="6">
    <location>
        <begin position="111"/>
        <end position="119"/>
    </location>
</feature>
<feature type="helix" evidence="6">
    <location>
        <begin position="121"/>
        <end position="123"/>
    </location>
</feature>
<feature type="strand" evidence="6">
    <location>
        <begin position="124"/>
        <end position="126"/>
    </location>
</feature>
<feature type="strand" evidence="5">
    <location>
        <begin position="132"/>
        <end position="137"/>
    </location>
</feature>
<feature type="helix" evidence="6">
    <location>
        <begin position="139"/>
        <end position="141"/>
    </location>
</feature>
<feature type="strand" evidence="5">
    <location>
        <begin position="145"/>
        <end position="147"/>
    </location>
</feature>
<feature type="helix" evidence="6">
    <location>
        <begin position="152"/>
        <end position="166"/>
    </location>
</feature>
<feature type="helix" evidence="6">
    <location>
        <begin position="168"/>
        <end position="172"/>
    </location>
</feature>
<feature type="strand" evidence="6">
    <location>
        <begin position="176"/>
        <end position="181"/>
    </location>
</feature>
<feature type="helix" evidence="6">
    <location>
        <begin position="185"/>
        <end position="187"/>
    </location>
</feature>
<feature type="strand" evidence="6">
    <location>
        <begin position="188"/>
        <end position="190"/>
    </location>
</feature>
<feature type="helix" evidence="6">
    <location>
        <begin position="196"/>
        <end position="198"/>
    </location>
</feature>
<feature type="helix" evidence="6">
    <location>
        <begin position="213"/>
        <end position="225"/>
    </location>
</feature>
<feature type="helix" evidence="6">
    <location>
        <begin position="236"/>
        <end position="238"/>
    </location>
</feature>
<feature type="helix" evidence="6">
    <location>
        <begin position="245"/>
        <end position="247"/>
    </location>
</feature>
<feature type="strand" evidence="6">
    <location>
        <begin position="248"/>
        <end position="252"/>
    </location>
</feature>
<feature type="helix" evidence="6">
    <location>
        <begin position="256"/>
        <end position="258"/>
    </location>
</feature>
<feature type="helix" evidence="6">
    <location>
        <begin position="260"/>
        <end position="288"/>
    </location>
</feature>
<feature type="strand" evidence="6">
    <location>
        <begin position="294"/>
        <end position="298"/>
    </location>
</feature>
<feature type="turn" evidence="6">
    <location>
        <begin position="304"/>
        <end position="307"/>
    </location>
</feature>
<feature type="helix" evidence="6">
    <location>
        <begin position="312"/>
        <end position="317"/>
    </location>
</feature>
<feature type="helix" evidence="6">
    <location>
        <begin position="329"/>
        <end position="337"/>
    </location>
</feature>
<feature type="strand" evidence="6">
    <location>
        <begin position="341"/>
        <end position="344"/>
    </location>
</feature>
<feature type="helix" evidence="6">
    <location>
        <begin position="351"/>
        <end position="353"/>
    </location>
</feature>
<feature type="helix" evidence="6">
    <location>
        <begin position="356"/>
        <end position="358"/>
    </location>
</feature>
<feature type="helix" evidence="6">
    <location>
        <begin position="362"/>
        <end position="375"/>
    </location>
</feature>
<feature type="strand" evidence="6">
    <location>
        <begin position="380"/>
        <end position="383"/>
    </location>
</feature>
<feature type="helix" evidence="6">
    <location>
        <begin position="391"/>
        <end position="401"/>
    </location>
</feature>
<feature type="strand" evidence="6">
    <location>
        <begin position="419"/>
        <end position="422"/>
    </location>
</feature>
<feature type="helix" evidence="6">
    <location>
        <begin position="426"/>
        <end position="429"/>
    </location>
</feature>
<feature type="helix" evidence="6">
    <location>
        <begin position="431"/>
        <end position="444"/>
    </location>
</feature>
<feature type="turn" evidence="6">
    <location>
        <begin position="445"/>
        <end position="447"/>
    </location>
</feature>
<feature type="turn" evidence="5">
    <location>
        <begin position="452"/>
        <end position="454"/>
    </location>
</feature>
<feature type="helix" evidence="6">
    <location>
        <begin position="469"/>
        <end position="473"/>
    </location>
</feature>
<feature type="helix" evidence="6">
    <location>
        <begin position="474"/>
        <end position="476"/>
    </location>
</feature>
<gene>
    <name type="primary">BMY1</name>
    <name type="synonym">AMYB</name>
</gene>
<proteinExistence type="evidence at protein level"/>